<feature type="chain" id="PRO_1000076527" description="Elongation factor P">
    <location>
        <begin position="1"/>
        <end position="188"/>
    </location>
</feature>
<keyword id="KW-0963">Cytoplasm</keyword>
<keyword id="KW-0251">Elongation factor</keyword>
<keyword id="KW-0648">Protein biosynthesis</keyword>
<accession>B0BWQ9</accession>
<dbReference type="EMBL" id="CP000766">
    <property type="protein sequence ID" value="ABY72285.1"/>
    <property type="molecule type" value="Genomic_DNA"/>
</dbReference>
<dbReference type="RefSeq" id="WP_012150536.1">
    <property type="nucleotide sequence ID" value="NC_010263.3"/>
</dbReference>
<dbReference type="SMR" id="B0BWQ9"/>
<dbReference type="GeneID" id="79937099"/>
<dbReference type="KEGG" id="rrj:RrIowa_0390"/>
<dbReference type="eggNOG" id="COG0231">
    <property type="taxonomic scope" value="Bacteria"/>
</dbReference>
<dbReference type="HOGENOM" id="CLU_074944_1_1_5"/>
<dbReference type="UniPathway" id="UPA00345"/>
<dbReference type="Proteomes" id="UP000000796">
    <property type="component" value="Chromosome"/>
</dbReference>
<dbReference type="GO" id="GO:0005737">
    <property type="term" value="C:cytoplasm"/>
    <property type="evidence" value="ECO:0007669"/>
    <property type="project" value="UniProtKB-SubCell"/>
</dbReference>
<dbReference type="GO" id="GO:0003746">
    <property type="term" value="F:translation elongation factor activity"/>
    <property type="evidence" value="ECO:0007669"/>
    <property type="project" value="UniProtKB-UniRule"/>
</dbReference>
<dbReference type="GO" id="GO:0043043">
    <property type="term" value="P:peptide biosynthetic process"/>
    <property type="evidence" value="ECO:0007669"/>
    <property type="project" value="InterPro"/>
</dbReference>
<dbReference type="CDD" id="cd04470">
    <property type="entry name" value="S1_EF-P_repeat_1"/>
    <property type="match status" value="1"/>
</dbReference>
<dbReference type="FunFam" id="2.30.30.30:FF:000003">
    <property type="entry name" value="Elongation factor P"/>
    <property type="match status" value="1"/>
</dbReference>
<dbReference type="FunFam" id="2.40.50.140:FF:000004">
    <property type="entry name" value="Elongation factor P"/>
    <property type="match status" value="1"/>
</dbReference>
<dbReference type="FunFam" id="2.40.50.140:FF:000009">
    <property type="entry name" value="Elongation factor P"/>
    <property type="match status" value="1"/>
</dbReference>
<dbReference type="Gene3D" id="2.30.30.30">
    <property type="match status" value="1"/>
</dbReference>
<dbReference type="Gene3D" id="2.40.50.140">
    <property type="entry name" value="Nucleic acid-binding proteins"/>
    <property type="match status" value="2"/>
</dbReference>
<dbReference type="HAMAP" id="MF_00141">
    <property type="entry name" value="EF_P"/>
    <property type="match status" value="1"/>
</dbReference>
<dbReference type="InterPro" id="IPR015365">
    <property type="entry name" value="Elong-fact-P_C"/>
</dbReference>
<dbReference type="InterPro" id="IPR012340">
    <property type="entry name" value="NA-bd_OB-fold"/>
</dbReference>
<dbReference type="InterPro" id="IPR014722">
    <property type="entry name" value="Rib_uL2_dom2"/>
</dbReference>
<dbReference type="InterPro" id="IPR020599">
    <property type="entry name" value="Transl_elong_fac_P/YeiP"/>
</dbReference>
<dbReference type="InterPro" id="IPR013185">
    <property type="entry name" value="Transl_elong_KOW-like"/>
</dbReference>
<dbReference type="InterPro" id="IPR001059">
    <property type="entry name" value="Transl_elong_P/YeiP_cen"/>
</dbReference>
<dbReference type="InterPro" id="IPR013852">
    <property type="entry name" value="Transl_elong_P/YeiP_CS"/>
</dbReference>
<dbReference type="InterPro" id="IPR011768">
    <property type="entry name" value="Transl_elongation_fac_P"/>
</dbReference>
<dbReference type="InterPro" id="IPR008991">
    <property type="entry name" value="Translation_prot_SH3-like_sf"/>
</dbReference>
<dbReference type="NCBIfam" id="TIGR00038">
    <property type="entry name" value="efp"/>
    <property type="match status" value="1"/>
</dbReference>
<dbReference type="NCBIfam" id="NF001810">
    <property type="entry name" value="PRK00529.1"/>
    <property type="match status" value="1"/>
</dbReference>
<dbReference type="PANTHER" id="PTHR30053">
    <property type="entry name" value="ELONGATION FACTOR P"/>
    <property type="match status" value="1"/>
</dbReference>
<dbReference type="PANTHER" id="PTHR30053:SF14">
    <property type="entry name" value="TRANSLATION ELONGATION FACTOR KOW-LIKE DOMAIN-CONTAINING PROTEIN"/>
    <property type="match status" value="1"/>
</dbReference>
<dbReference type="Pfam" id="PF01132">
    <property type="entry name" value="EFP"/>
    <property type="match status" value="1"/>
</dbReference>
<dbReference type="Pfam" id="PF08207">
    <property type="entry name" value="EFP_N"/>
    <property type="match status" value="1"/>
</dbReference>
<dbReference type="Pfam" id="PF09285">
    <property type="entry name" value="Elong-fact-P_C"/>
    <property type="match status" value="1"/>
</dbReference>
<dbReference type="PIRSF" id="PIRSF005901">
    <property type="entry name" value="EF-P"/>
    <property type="match status" value="1"/>
</dbReference>
<dbReference type="SMART" id="SM01185">
    <property type="entry name" value="EFP"/>
    <property type="match status" value="1"/>
</dbReference>
<dbReference type="SMART" id="SM00841">
    <property type="entry name" value="Elong-fact-P_C"/>
    <property type="match status" value="1"/>
</dbReference>
<dbReference type="SUPFAM" id="SSF50249">
    <property type="entry name" value="Nucleic acid-binding proteins"/>
    <property type="match status" value="2"/>
</dbReference>
<dbReference type="SUPFAM" id="SSF50104">
    <property type="entry name" value="Translation proteins SH3-like domain"/>
    <property type="match status" value="1"/>
</dbReference>
<dbReference type="PROSITE" id="PS01275">
    <property type="entry name" value="EFP"/>
    <property type="match status" value="1"/>
</dbReference>
<protein>
    <recommendedName>
        <fullName evidence="1">Elongation factor P</fullName>
        <shortName evidence="1">EF-P</shortName>
    </recommendedName>
</protein>
<sequence length="188" mass="21473">MKISANSIRTGNILVYNNDLWVVSKTPEHTQPGKGGAYVQVEMKNLKTGTKRNERFSSADYLEKAELEQKDYQFLYFEGDDLVLMDTKHFDQINISKEMLEEKLSFLTENMIVKIEFYNDKPLNIELPPTVILEISETDPVIKGATATASYKPAILENGIKVKVPQYLEIGEKIVVKTDDMTYVERAK</sequence>
<gene>
    <name evidence="1" type="primary">efp</name>
    <name type="ordered locus">RrIowa_0390</name>
</gene>
<name>EFP_RICRO</name>
<proteinExistence type="inferred from homology"/>
<organism>
    <name type="scientific">Rickettsia rickettsii (strain Iowa)</name>
    <dbReference type="NCBI Taxonomy" id="452659"/>
    <lineage>
        <taxon>Bacteria</taxon>
        <taxon>Pseudomonadati</taxon>
        <taxon>Pseudomonadota</taxon>
        <taxon>Alphaproteobacteria</taxon>
        <taxon>Rickettsiales</taxon>
        <taxon>Rickettsiaceae</taxon>
        <taxon>Rickettsieae</taxon>
        <taxon>Rickettsia</taxon>
        <taxon>spotted fever group</taxon>
    </lineage>
</organism>
<evidence type="ECO:0000255" key="1">
    <source>
        <dbReference type="HAMAP-Rule" id="MF_00141"/>
    </source>
</evidence>
<comment type="function">
    <text evidence="1">Involved in peptide bond synthesis. Stimulates efficient translation and peptide-bond synthesis on native or reconstituted 70S ribosomes in vitro. Probably functions indirectly by altering the affinity of the ribosome for aminoacyl-tRNA, thus increasing their reactivity as acceptors for peptidyl transferase.</text>
</comment>
<comment type="pathway">
    <text evidence="1">Protein biosynthesis; polypeptide chain elongation.</text>
</comment>
<comment type="subcellular location">
    <subcellularLocation>
        <location evidence="1">Cytoplasm</location>
    </subcellularLocation>
</comment>
<comment type="similarity">
    <text evidence="1">Belongs to the elongation factor P family.</text>
</comment>
<reference key="1">
    <citation type="journal article" date="2008" name="Infect. Immun.">
        <title>Genomic comparison of virulent Rickettsia rickettsii Sheila Smith and avirulent Rickettsia rickettsii Iowa.</title>
        <authorList>
            <person name="Ellison D.W."/>
            <person name="Clark T.R."/>
            <person name="Sturdevant D.E."/>
            <person name="Virtaneva K."/>
            <person name="Porcella S.F."/>
            <person name="Hackstadt T."/>
        </authorList>
    </citation>
    <scope>NUCLEOTIDE SEQUENCE [LARGE SCALE GENOMIC DNA]</scope>
    <source>
        <strain>Iowa</strain>
    </source>
</reference>